<comment type="function">
    <text evidence="1">Catalyzes the transfer of the cytidylyl group of CTP to D-ribitol 5-phosphate.</text>
</comment>
<comment type="catalytic activity">
    <reaction evidence="1">
        <text>D-ribitol 5-phosphate + CTP + H(+) = CDP-L-ribitol + diphosphate</text>
        <dbReference type="Rhea" id="RHEA:12456"/>
        <dbReference type="ChEBI" id="CHEBI:15378"/>
        <dbReference type="ChEBI" id="CHEBI:33019"/>
        <dbReference type="ChEBI" id="CHEBI:37563"/>
        <dbReference type="ChEBI" id="CHEBI:57608"/>
        <dbReference type="ChEBI" id="CHEBI:57695"/>
        <dbReference type="EC" id="2.7.7.40"/>
    </reaction>
</comment>
<comment type="pathway">
    <text evidence="1">Cell wall biogenesis; poly(ribitol phosphate) teichoic acid biosynthesis.</text>
</comment>
<comment type="similarity">
    <text evidence="1">Belongs to the IspD/TarI cytidylyltransferase family. TarI subfamily.</text>
</comment>
<feature type="chain" id="PRO_0000237825" description="Ribitol-5-phosphate cytidylyltransferase 1">
    <location>
        <begin position="1"/>
        <end position="238"/>
    </location>
</feature>
<feature type="binding site" evidence="1">
    <location>
        <begin position="7"/>
        <end position="10"/>
    </location>
    <ligand>
        <name>CTP</name>
        <dbReference type="ChEBI" id="CHEBI:37563"/>
    </ligand>
</feature>
<feature type="binding site" evidence="1">
    <location>
        <begin position="81"/>
        <end position="87"/>
    </location>
    <ligand>
        <name>CTP</name>
        <dbReference type="ChEBI" id="CHEBI:37563"/>
    </ligand>
</feature>
<feature type="site" description="Transition state stabilizer" evidence="1">
    <location>
        <position position="14"/>
    </location>
</feature>
<feature type="site" description="Transition state stabilizer" evidence="1">
    <location>
        <position position="22"/>
    </location>
</feature>
<feature type="site" description="Positions ribitol 5-phosphate for the nucleophilic attack" evidence="1">
    <location>
        <position position="160"/>
    </location>
</feature>
<feature type="site" description="Positions ribitol 5-phosphate for the nucleophilic attack" evidence="1">
    <location>
        <position position="217"/>
    </location>
</feature>
<dbReference type="EC" id="2.7.7.40" evidence="1"/>
<dbReference type="EMBL" id="CP000255">
    <property type="protein sequence ID" value="ABD21335.1"/>
    <property type="molecule type" value="Genomic_DNA"/>
</dbReference>
<dbReference type="RefSeq" id="WP_000872486.1">
    <property type="nucleotide sequence ID" value="NZ_CP027476.1"/>
</dbReference>
<dbReference type="SMR" id="Q2FK15"/>
<dbReference type="KEGG" id="saa:SAUSA300_0249"/>
<dbReference type="HOGENOM" id="CLU_061281_2_3_9"/>
<dbReference type="OMA" id="CQEYGNA"/>
<dbReference type="UniPathway" id="UPA00790"/>
<dbReference type="Proteomes" id="UP000001939">
    <property type="component" value="Chromosome"/>
</dbReference>
<dbReference type="GO" id="GO:0050518">
    <property type="term" value="F:2-C-methyl-D-erythritol 4-phosphate cytidylyltransferase activity"/>
    <property type="evidence" value="ECO:0007669"/>
    <property type="project" value="TreeGrafter"/>
</dbReference>
<dbReference type="GO" id="GO:0047349">
    <property type="term" value="F:D-ribitol-5-phosphate cytidylyltransferase activity"/>
    <property type="evidence" value="ECO:0007669"/>
    <property type="project" value="UniProtKB-UniRule"/>
</dbReference>
<dbReference type="GO" id="GO:0071555">
    <property type="term" value="P:cell wall organization"/>
    <property type="evidence" value="ECO:0007669"/>
    <property type="project" value="UniProtKB-KW"/>
</dbReference>
<dbReference type="GO" id="GO:0008299">
    <property type="term" value="P:isoprenoid biosynthetic process"/>
    <property type="evidence" value="ECO:0007669"/>
    <property type="project" value="InterPro"/>
</dbReference>
<dbReference type="GO" id="GO:1902012">
    <property type="term" value="P:poly(ribitol phosphate) teichoic acid biosynthetic process"/>
    <property type="evidence" value="ECO:0007669"/>
    <property type="project" value="UniProtKB-UniRule"/>
</dbReference>
<dbReference type="CDD" id="cd02516">
    <property type="entry name" value="CDP-ME_synthetase"/>
    <property type="match status" value="1"/>
</dbReference>
<dbReference type="FunFam" id="3.90.550.10:FF:000003">
    <property type="entry name" value="2-C-methyl-D-erythritol 4-phosphate cytidylyltransferase"/>
    <property type="match status" value="1"/>
</dbReference>
<dbReference type="Gene3D" id="3.90.550.10">
    <property type="entry name" value="Spore Coat Polysaccharide Biosynthesis Protein SpsA, Chain A"/>
    <property type="match status" value="1"/>
</dbReference>
<dbReference type="HAMAP" id="MF_02068">
    <property type="entry name" value="TarI"/>
    <property type="match status" value="1"/>
</dbReference>
<dbReference type="InterPro" id="IPR034683">
    <property type="entry name" value="IspD/TarI"/>
</dbReference>
<dbReference type="InterPro" id="IPR050088">
    <property type="entry name" value="IspD/TarI_cytidylyltransf_bact"/>
</dbReference>
<dbReference type="InterPro" id="IPR018294">
    <property type="entry name" value="ISPD_synthase_CS"/>
</dbReference>
<dbReference type="InterPro" id="IPR029044">
    <property type="entry name" value="Nucleotide-diphossugar_trans"/>
</dbReference>
<dbReference type="InterPro" id="IPR034709">
    <property type="entry name" value="TarI"/>
</dbReference>
<dbReference type="NCBIfam" id="NF001183">
    <property type="entry name" value="PRK00155.1-3"/>
    <property type="match status" value="1"/>
</dbReference>
<dbReference type="NCBIfam" id="NF009924">
    <property type="entry name" value="PRK13385.1"/>
    <property type="match status" value="1"/>
</dbReference>
<dbReference type="PANTHER" id="PTHR32125">
    <property type="entry name" value="2-C-METHYL-D-ERYTHRITOL 4-PHOSPHATE CYTIDYLYLTRANSFERASE, CHLOROPLASTIC"/>
    <property type="match status" value="1"/>
</dbReference>
<dbReference type="PANTHER" id="PTHR32125:SF8">
    <property type="entry name" value="RIBITOL-5-PHOSPHATE CYTIDYLYLTRANSFERASE"/>
    <property type="match status" value="1"/>
</dbReference>
<dbReference type="Pfam" id="PF01128">
    <property type="entry name" value="IspD"/>
    <property type="match status" value="1"/>
</dbReference>
<dbReference type="SUPFAM" id="SSF53448">
    <property type="entry name" value="Nucleotide-diphospho-sugar transferases"/>
    <property type="match status" value="1"/>
</dbReference>
<dbReference type="PROSITE" id="PS01295">
    <property type="entry name" value="ISPD"/>
    <property type="match status" value="1"/>
</dbReference>
<organism>
    <name type="scientific">Staphylococcus aureus (strain USA300)</name>
    <dbReference type="NCBI Taxonomy" id="367830"/>
    <lineage>
        <taxon>Bacteria</taxon>
        <taxon>Bacillati</taxon>
        <taxon>Bacillota</taxon>
        <taxon>Bacilli</taxon>
        <taxon>Bacillales</taxon>
        <taxon>Staphylococcaceae</taxon>
        <taxon>Staphylococcus</taxon>
    </lineage>
</organism>
<accession>Q2FK15</accession>
<gene>
    <name evidence="1" type="primary">tarI1</name>
    <name type="ordered locus">SAUSA300_0249</name>
</gene>
<sequence>MKYAGILAGGIGSRMGNVPLPKQFLDLDNKPILIHTLEKFILINDFEKIIIATPQQWMTHTKDTLRKFKISDERIEVIQGGSDRNDTIMNIVKHIESTNGINDDDVIVTHDAVRPFLTHRIIKENIQAALEYGAVDTVIDAIDTIVTSKDNQTIDAIPVRNEMYQGQTPQSFNINLLKESYAQLSDEQKSILSDACKIIVETNKPVRLVKGELYNIKVTTPYDLKVANAIIRGGIADD</sequence>
<protein>
    <recommendedName>
        <fullName evidence="1">Ribitol-5-phosphate cytidylyltransferase 1</fullName>
        <ecNumber evidence="1">2.7.7.40</ecNumber>
    </recommendedName>
</protein>
<proteinExistence type="inferred from homology"/>
<keyword id="KW-0961">Cell wall biogenesis/degradation</keyword>
<keyword id="KW-0548">Nucleotidyltransferase</keyword>
<keyword id="KW-0777">Teichoic acid biosynthesis</keyword>
<keyword id="KW-0808">Transferase</keyword>
<reference key="1">
    <citation type="journal article" date="2006" name="Lancet">
        <title>Complete genome sequence of USA300, an epidemic clone of community-acquired meticillin-resistant Staphylococcus aureus.</title>
        <authorList>
            <person name="Diep B.A."/>
            <person name="Gill S.R."/>
            <person name="Chang R.F."/>
            <person name="Phan T.H."/>
            <person name="Chen J.H."/>
            <person name="Davidson M.G."/>
            <person name="Lin F."/>
            <person name="Lin J."/>
            <person name="Carleton H.A."/>
            <person name="Mongodin E.F."/>
            <person name="Sensabaugh G.F."/>
            <person name="Perdreau-Remington F."/>
        </authorList>
    </citation>
    <scope>NUCLEOTIDE SEQUENCE [LARGE SCALE GENOMIC DNA]</scope>
    <source>
        <strain>USA300</strain>
    </source>
</reference>
<evidence type="ECO:0000255" key="1">
    <source>
        <dbReference type="HAMAP-Rule" id="MF_02068"/>
    </source>
</evidence>
<name>TARI1_STAA3</name>